<keyword id="KW-0597">Phosphoprotein</keyword>
<keyword id="KW-1267">Proteomics identification</keyword>
<keyword id="KW-1185">Reference proteome</keyword>
<keyword id="KW-0727">SH2 domain</keyword>
<dbReference type="EMBL" id="AC008988">
    <property type="status" value="NOT_ANNOTATED_CDS"/>
    <property type="molecule type" value="Genomic_DNA"/>
</dbReference>
<dbReference type="EMBL" id="AC138433">
    <property type="status" value="NOT_ANNOTATED_CDS"/>
    <property type="molecule type" value="Genomic_DNA"/>
</dbReference>
<dbReference type="EMBL" id="AC006124">
    <property type="status" value="NOT_ANNOTATED_CDS"/>
    <property type="molecule type" value="Genomic_DNA"/>
</dbReference>
<dbReference type="EMBL" id="AB001451">
    <property type="protein sequence ID" value="BAA25798.1"/>
    <property type="molecule type" value="mRNA"/>
</dbReference>
<dbReference type="EMBL" id="AL360254">
    <property type="protein sequence ID" value="CAB96175.1"/>
    <property type="molecule type" value="mRNA"/>
</dbReference>
<dbReference type="CCDS" id="CCDS45891.1"/>
<dbReference type="RefSeq" id="NP_036567.2">
    <property type="nucleotide sequence ID" value="NM_012435.3"/>
</dbReference>
<dbReference type="SMR" id="P98077"/>
<dbReference type="BioGRID" id="117302">
    <property type="interactions" value="42"/>
</dbReference>
<dbReference type="CORUM" id="P98077"/>
<dbReference type="FunCoup" id="P98077">
    <property type="interactions" value="1182"/>
</dbReference>
<dbReference type="IntAct" id="P98077">
    <property type="interactions" value="89"/>
</dbReference>
<dbReference type="MINT" id="P98077"/>
<dbReference type="STRING" id="9606.ENSP00000264554"/>
<dbReference type="BindingDB" id="P98077"/>
<dbReference type="ChEMBL" id="CHEMBL3299"/>
<dbReference type="GlyGen" id="P98077">
    <property type="glycosylation" value="1 site"/>
</dbReference>
<dbReference type="iPTMnet" id="P98077"/>
<dbReference type="PhosphoSitePlus" id="P98077"/>
<dbReference type="BioMuta" id="SHC2"/>
<dbReference type="DMDM" id="193806386"/>
<dbReference type="jPOST" id="P98077"/>
<dbReference type="MassIVE" id="P98077"/>
<dbReference type="PaxDb" id="9606-ENSP00000264554"/>
<dbReference type="PeptideAtlas" id="P98077"/>
<dbReference type="ProteomicsDB" id="57785"/>
<dbReference type="Antibodypedia" id="1493">
    <property type="antibodies" value="141 antibodies from 29 providers"/>
</dbReference>
<dbReference type="DNASU" id="25759"/>
<dbReference type="Ensembl" id="ENST00000264554.11">
    <property type="protein sequence ID" value="ENSP00000264554.4"/>
    <property type="gene ID" value="ENSG00000129946.11"/>
</dbReference>
<dbReference type="GeneID" id="25759"/>
<dbReference type="KEGG" id="hsa:25759"/>
<dbReference type="MANE-Select" id="ENST00000264554.11">
    <property type="protein sequence ID" value="ENSP00000264554.4"/>
    <property type="RefSeq nucleotide sequence ID" value="NM_012435.3"/>
    <property type="RefSeq protein sequence ID" value="NP_036567.2"/>
</dbReference>
<dbReference type="UCSC" id="uc002loq.4">
    <property type="organism name" value="human"/>
</dbReference>
<dbReference type="AGR" id="HGNC:29869"/>
<dbReference type="CTD" id="25759"/>
<dbReference type="DisGeNET" id="25759"/>
<dbReference type="GeneCards" id="SHC2"/>
<dbReference type="HGNC" id="HGNC:29869">
    <property type="gene designation" value="SHC2"/>
</dbReference>
<dbReference type="HPA" id="ENSG00000129946">
    <property type="expression patterns" value="Tissue enhanced (pancreas)"/>
</dbReference>
<dbReference type="MIM" id="605217">
    <property type="type" value="gene"/>
</dbReference>
<dbReference type="neXtProt" id="NX_P98077"/>
<dbReference type="OpenTargets" id="ENSG00000129946"/>
<dbReference type="PharmGKB" id="PA134971076"/>
<dbReference type="VEuPathDB" id="HostDB:ENSG00000129946"/>
<dbReference type="eggNOG" id="KOG3697">
    <property type="taxonomic scope" value="Eukaryota"/>
</dbReference>
<dbReference type="GeneTree" id="ENSGT01110000268207"/>
<dbReference type="HOGENOM" id="CLU_029532_2_0_1"/>
<dbReference type="InParanoid" id="P98077"/>
<dbReference type="OMA" id="GDEWSRK"/>
<dbReference type="OrthoDB" id="9938362at2759"/>
<dbReference type="PAN-GO" id="P98077">
    <property type="GO annotations" value="3 GO annotations based on evolutionary models"/>
</dbReference>
<dbReference type="PhylomeDB" id="P98077"/>
<dbReference type="TreeFam" id="TF315807"/>
<dbReference type="PathwayCommons" id="P98077"/>
<dbReference type="Reactome" id="R-HSA-167044">
    <property type="pathway name" value="Signalling to RAS"/>
</dbReference>
<dbReference type="Reactome" id="R-HSA-4420097">
    <property type="pathway name" value="VEGFA-VEGFR2 Pathway"/>
</dbReference>
<dbReference type="Reactome" id="R-HSA-5673001">
    <property type="pathway name" value="RAF/MAP kinase cascade"/>
</dbReference>
<dbReference type="SignaLink" id="P98077"/>
<dbReference type="SIGNOR" id="P98077"/>
<dbReference type="BioGRID-ORCS" id="25759">
    <property type="hits" value="13 hits in 1149 CRISPR screens"/>
</dbReference>
<dbReference type="ChiTaRS" id="SHC2">
    <property type="organism name" value="human"/>
</dbReference>
<dbReference type="GeneWiki" id="SHC2"/>
<dbReference type="GenomeRNAi" id="25759"/>
<dbReference type="Pharos" id="P98077">
    <property type="development level" value="Tbio"/>
</dbReference>
<dbReference type="PRO" id="PR:P98077"/>
<dbReference type="Proteomes" id="UP000005640">
    <property type="component" value="Chromosome 19"/>
</dbReference>
<dbReference type="RNAct" id="P98077">
    <property type="molecule type" value="protein"/>
</dbReference>
<dbReference type="Bgee" id="ENSG00000129946">
    <property type="expression patterns" value="Expressed in body of pancreas and 164 other cell types or tissues"/>
</dbReference>
<dbReference type="ExpressionAtlas" id="P98077">
    <property type="expression patterns" value="baseline and differential"/>
</dbReference>
<dbReference type="GO" id="GO:0005829">
    <property type="term" value="C:cytosol"/>
    <property type="evidence" value="ECO:0000304"/>
    <property type="project" value="Reactome"/>
</dbReference>
<dbReference type="GO" id="GO:0005886">
    <property type="term" value="C:plasma membrane"/>
    <property type="evidence" value="ECO:0000318"/>
    <property type="project" value="GO_Central"/>
</dbReference>
<dbReference type="GO" id="GO:0030971">
    <property type="term" value="F:receptor tyrosine kinase binding"/>
    <property type="evidence" value="ECO:0000318"/>
    <property type="project" value="GO_Central"/>
</dbReference>
<dbReference type="GO" id="GO:0007169">
    <property type="term" value="P:cell surface receptor protein tyrosine kinase signaling pathway"/>
    <property type="evidence" value="ECO:0000318"/>
    <property type="project" value="GO_Central"/>
</dbReference>
<dbReference type="GO" id="GO:0035556">
    <property type="term" value="P:intracellular signal transduction"/>
    <property type="evidence" value="ECO:0007669"/>
    <property type="project" value="InterPro"/>
</dbReference>
<dbReference type="CDD" id="cd01209">
    <property type="entry name" value="PTB_Shc"/>
    <property type="match status" value="1"/>
</dbReference>
<dbReference type="CDD" id="cd09925">
    <property type="entry name" value="SH2_SHC"/>
    <property type="match status" value="1"/>
</dbReference>
<dbReference type="FunFam" id="2.30.29.30:FF:000036">
    <property type="entry name" value="SHC-transforming protein 1 isoform 3"/>
    <property type="match status" value="1"/>
</dbReference>
<dbReference type="FunFam" id="3.30.505.10:FF:000005">
    <property type="entry name" value="SHC-transforming protein 1 isoform 3"/>
    <property type="match status" value="1"/>
</dbReference>
<dbReference type="Gene3D" id="2.30.29.30">
    <property type="entry name" value="Pleckstrin-homology domain (PH domain)/Phosphotyrosine-binding domain (PTB)"/>
    <property type="match status" value="1"/>
</dbReference>
<dbReference type="Gene3D" id="3.30.505.10">
    <property type="entry name" value="SH2 domain"/>
    <property type="match status" value="1"/>
</dbReference>
<dbReference type="InterPro" id="IPR051235">
    <property type="entry name" value="CEP152/SHC-Transforming"/>
</dbReference>
<dbReference type="InterPro" id="IPR011993">
    <property type="entry name" value="PH-like_dom_sf"/>
</dbReference>
<dbReference type="InterPro" id="IPR006019">
    <property type="entry name" value="PID_Shc-like"/>
</dbReference>
<dbReference type="InterPro" id="IPR006020">
    <property type="entry name" value="PTB/PI_dom"/>
</dbReference>
<dbReference type="InterPro" id="IPR000980">
    <property type="entry name" value="SH2"/>
</dbReference>
<dbReference type="InterPro" id="IPR036860">
    <property type="entry name" value="SH2_dom_sf"/>
</dbReference>
<dbReference type="InterPro" id="IPR035676">
    <property type="entry name" value="SHC_SH2"/>
</dbReference>
<dbReference type="PANTHER" id="PTHR10337">
    <property type="entry name" value="SHC TRANSFORMING PROTEIN"/>
    <property type="match status" value="1"/>
</dbReference>
<dbReference type="PANTHER" id="PTHR10337:SF5">
    <property type="entry name" value="SHC-TRANSFORMING PROTEIN 2"/>
    <property type="match status" value="1"/>
</dbReference>
<dbReference type="Pfam" id="PF00640">
    <property type="entry name" value="PID"/>
    <property type="match status" value="1"/>
</dbReference>
<dbReference type="Pfam" id="PF00017">
    <property type="entry name" value="SH2"/>
    <property type="match status" value="1"/>
</dbReference>
<dbReference type="PRINTS" id="PR00401">
    <property type="entry name" value="SH2DOMAIN"/>
</dbReference>
<dbReference type="PRINTS" id="PR00629">
    <property type="entry name" value="SHCPIDOMAIN"/>
</dbReference>
<dbReference type="SMART" id="SM00462">
    <property type="entry name" value="PTB"/>
    <property type="match status" value="1"/>
</dbReference>
<dbReference type="SMART" id="SM00252">
    <property type="entry name" value="SH2"/>
    <property type="match status" value="1"/>
</dbReference>
<dbReference type="SUPFAM" id="SSF50729">
    <property type="entry name" value="PH domain-like"/>
    <property type="match status" value="1"/>
</dbReference>
<dbReference type="SUPFAM" id="SSF55550">
    <property type="entry name" value="SH2 domain"/>
    <property type="match status" value="1"/>
</dbReference>
<dbReference type="PROSITE" id="PS01179">
    <property type="entry name" value="PID"/>
    <property type="match status" value="1"/>
</dbReference>
<dbReference type="PROSITE" id="PS50001">
    <property type="entry name" value="SH2"/>
    <property type="match status" value="1"/>
</dbReference>
<name>SHC2_HUMAN</name>
<feature type="chain" id="PRO_0000097732" description="SHC-transforming protein 2">
    <location>
        <begin position="1"/>
        <end position="582"/>
    </location>
</feature>
<feature type="domain" description="PID" evidence="2">
    <location>
        <begin position="147"/>
        <end position="329"/>
    </location>
</feature>
<feature type="domain" description="SH2" evidence="3">
    <location>
        <begin position="487"/>
        <end position="578"/>
    </location>
</feature>
<feature type="region of interest" description="Disordered" evidence="4">
    <location>
        <begin position="1"/>
        <end position="24"/>
    </location>
</feature>
<feature type="region of interest" description="Disordered" evidence="4">
    <location>
        <begin position="47"/>
        <end position="70"/>
    </location>
</feature>
<feature type="region of interest" description="CH1">
    <location>
        <begin position="330"/>
        <end position="486"/>
    </location>
</feature>
<feature type="region of interest" description="Disordered" evidence="4">
    <location>
        <begin position="460"/>
        <end position="481"/>
    </location>
</feature>
<feature type="compositionally biased region" description="Pro residues" evidence="4">
    <location>
        <begin position="8"/>
        <end position="20"/>
    </location>
</feature>
<feature type="modified residue" description="Phosphotyrosine" evidence="9">
    <location>
        <position position="338"/>
    </location>
</feature>
<feature type="modified residue" description="Phosphotyrosine" evidence="9">
    <location>
        <position position="339"/>
    </location>
</feature>
<feature type="modified residue" description="Phosphotyrosine" evidence="9">
    <location>
        <position position="414"/>
    </location>
</feature>
<feature type="sequence conflict" description="In Ref. 2; BAA25798." evidence="8" ref="2">
    <original>GRGPAAARAAGA</original>
    <variation>IRGSNAQKVVGASG</variation>
    <location>
        <begin position="45"/>
        <end position="56"/>
    </location>
</feature>
<feature type="sequence conflict" description="In Ref. 2; BAA25798." evidence="8" ref="2">
    <original>D</original>
    <variation>G</variation>
    <location>
        <position position="61"/>
    </location>
</feature>
<feature type="sequence conflict" description="In Ref. 2; BAA25798." evidence="8" ref="2">
    <original>E</original>
    <variation>D</variation>
    <location>
        <position position="65"/>
    </location>
</feature>
<feature type="sequence conflict" description="In Ref. 3." evidence="8" ref="3">
    <original>LSRCRGAGSRGSRGGRGAAGSGDAAAAAEW</original>
    <variation>MAFAGLASHVWWWRPSSQNRIWFRRGSPEF</variation>
    <location>
        <begin position="96"/>
        <end position="125"/>
    </location>
</feature>
<feature type="sequence conflict" description="In Ref. 4." evidence="8" ref="4">
    <original>A</original>
    <variation>P</variation>
    <location>
        <position position="114"/>
    </location>
</feature>
<feature type="sequence conflict" description="In Ref. 3." evidence="8" ref="3">
    <original>E</original>
    <variation>I</variation>
    <location>
        <position position="188"/>
    </location>
</feature>
<feature type="sequence conflict" description="In Ref. 3." evidence="8" ref="3">
    <original>I</original>
    <variation>T</variation>
    <location>
        <position position="226"/>
    </location>
</feature>
<feature type="sequence conflict" description="In Ref. 3." evidence="8" ref="3">
    <original>I</original>
    <variation>E</variation>
    <location>
        <position position="272"/>
    </location>
</feature>
<feature type="sequence conflict" description="In Ref. 3." evidence="8" ref="3">
    <location>
        <position position="440"/>
    </location>
</feature>
<accession>P98077</accession>
<accession>O60230</accession>
<accession>Q9NPL5</accession>
<accession>Q9UCX4</accession>
<sequence>MTQGPGGRAPPAPPAPPEPEAPTTFCALLPRMPQWKFAAPGGFLGRGPAAARAAGASGGADPQPEPAGPGGVPALAAAVLGACEPRCAAPCPLPALSRCRGAGSRGSRGGRGAAGSGDAAAAAEWIRKGSFIHKPAHGWLHPDARVLGPGVSYVVRYMGCIEVLRSMRSLDFNTRTQVTREAINRLHEAVPGVRGSWKKKAPNKALASVLGKSNLRFAGMSISIHISTDGLSLSVPATRQVIANHHMPSISFASGGDTDMTDYVAYVAKDPINQRACHILECCEGLAQSIISTVGQAFELRFKQYLHSPPKVALPPERLAGPEESAWGDEEDSLEHNYYNSIPGKEPPLGGLVDSRLALTQPCALTALDQGPSPSLRDACSLPWDVGSTGTAPPGDGYVQADARGPPDHEEHLYVNTQGLDAPEPEDSPKKDLFDMRPFEDALKLHECSVAAGVTAAPLPLEDQWPSPPTRRAPVAPTEEQLRQEPWYHGRMSRRAAERMLRADGDFLVRDSVTNPGQYVLTGMHAGQPKHLLLVDPEGVVRTKDVLFESISHLIDHHLQNGQPIVAAESELHLRGVVSREP</sequence>
<evidence type="ECO:0000250" key="1"/>
<evidence type="ECO:0000255" key="2">
    <source>
        <dbReference type="PROSITE-ProRule" id="PRU00148"/>
    </source>
</evidence>
<evidence type="ECO:0000255" key="3">
    <source>
        <dbReference type="PROSITE-ProRule" id="PRU00191"/>
    </source>
</evidence>
<evidence type="ECO:0000256" key="4">
    <source>
        <dbReference type="SAM" id="MobiDB-lite"/>
    </source>
</evidence>
<evidence type="ECO:0000269" key="5">
    <source>
    </source>
</evidence>
<evidence type="ECO:0000269" key="6">
    <source>
    </source>
</evidence>
<evidence type="ECO:0000269" key="7">
    <source>
    </source>
</evidence>
<evidence type="ECO:0000305" key="8"/>
<evidence type="ECO:0000305" key="9">
    <source>
    </source>
</evidence>
<gene>
    <name type="primary">SHC2</name>
    <name type="synonym">SCK</name>
    <name type="synonym">SHCB</name>
</gene>
<organism>
    <name type="scientific">Homo sapiens</name>
    <name type="common">Human</name>
    <dbReference type="NCBI Taxonomy" id="9606"/>
    <lineage>
        <taxon>Eukaryota</taxon>
        <taxon>Metazoa</taxon>
        <taxon>Chordata</taxon>
        <taxon>Craniata</taxon>
        <taxon>Vertebrata</taxon>
        <taxon>Euteleostomi</taxon>
        <taxon>Mammalia</taxon>
        <taxon>Eutheria</taxon>
        <taxon>Euarchontoglires</taxon>
        <taxon>Primates</taxon>
        <taxon>Haplorrhini</taxon>
        <taxon>Catarrhini</taxon>
        <taxon>Hominidae</taxon>
        <taxon>Homo</taxon>
    </lineage>
</organism>
<comment type="function">
    <text evidence="1">Signaling adapter that couples activated growth factor receptors to signaling pathway in neurons. Involved in the signal transduction pathways of neurotrophin-activated Trk receptors in cortical neurons (By similarity).</text>
</comment>
<comment type="subunit">
    <text evidence="5 6 7">Interacts with the Trk receptors in a phosphotyrosine-dependent manner and MEGF12. Once activated, binds to GRB2.</text>
</comment>
<comment type="interaction">
    <interactant intactId="EBI-7256023">
        <id>P98077</id>
    </interactant>
    <interactant intactId="EBI-297353">
        <id>P00533</id>
        <label>EGFR</label>
    </interactant>
    <organismsDiffer>false</organismsDiffer>
    <experiments>3</experiments>
</comment>
<comment type="interaction">
    <interactant intactId="EBI-7256023">
        <id>P98077</id>
    </interactant>
    <interactant intactId="EBI-641062">
        <id>P04626</id>
        <label>ERBB2</label>
    </interactant>
    <organismsDiffer>false</organismsDiffer>
    <experiments>3</experiments>
</comment>
<comment type="interaction">
    <interactant intactId="EBI-7256023">
        <id>P98077</id>
    </interactant>
    <interactant intactId="EBI-1379503">
        <id>P10721</id>
        <label>KIT</label>
    </interactant>
    <organismsDiffer>false</organismsDiffer>
    <experiments>5</experiments>
</comment>
<comment type="interaction">
    <interactant intactId="EBI-7256023">
        <id>P98077</id>
    </interactant>
    <interactant intactId="EBI-1039152">
        <id>P08581</id>
        <label>MET</label>
    </interactant>
    <organismsDiffer>false</organismsDiffer>
    <experiments>2</experiments>
</comment>
<comment type="tissue specificity">
    <text evidence="7">Expressed in brain. Expressed at high level in the hypothalamus and at low level in the caudate nucleus.</text>
</comment>
<comment type="domain">
    <text>The PID domain mediates binding to the TrkA receptor.</text>
</comment>
<comment type="PTM">
    <text evidence="5">Phosphorylated on tyrosines by the Trk receptors.</text>
</comment>
<comment type="miscellaneous">
    <text>PubMed:15057824 has shown that SHC2 is poorly phosphorylated by the Trk receptors, in opposite to PubMed:12006576.</text>
</comment>
<reference key="1">
    <citation type="journal article" date="2004" name="Nature">
        <title>The DNA sequence and biology of human chromosome 19.</title>
        <authorList>
            <person name="Grimwood J."/>
            <person name="Gordon L.A."/>
            <person name="Olsen A.S."/>
            <person name="Terry A."/>
            <person name="Schmutz J."/>
            <person name="Lamerdin J.E."/>
            <person name="Hellsten U."/>
            <person name="Goodstein D."/>
            <person name="Couronne O."/>
            <person name="Tran-Gyamfi M."/>
            <person name="Aerts A."/>
            <person name="Altherr M."/>
            <person name="Ashworth L."/>
            <person name="Bajorek E."/>
            <person name="Black S."/>
            <person name="Branscomb E."/>
            <person name="Caenepeel S."/>
            <person name="Carrano A.V."/>
            <person name="Caoile C."/>
            <person name="Chan Y.M."/>
            <person name="Christensen M."/>
            <person name="Cleland C.A."/>
            <person name="Copeland A."/>
            <person name="Dalin E."/>
            <person name="Dehal P."/>
            <person name="Denys M."/>
            <person name="Detter J.C."/>
            <person name="Escobar J."/>
            <person name="Flowers D."/>
            <person name="Fotopulos D."/>
            <person name="Garcia C."/>
            <person name="Georgescu A.M."/>
            <person name="Glavina T."/>
            <person name="Gomez M."/>
            <person name="Gonzales E."/>
            <person name="Groza M."/>
            <person name="Hammon N."/>
            <person name="Hawkins T."/>
            <person name="Haydu L."/>
            <person name="Ho I."/>
            <person name="Huang W."/>
            <person name="Israni S."/>
            <person name="Jett J."/>
            <person name="Kadner K."/>
            <person name="Kimball H."/>
            <person name="Kobayashi A."/>
            <person name="Larionov V."/>
            <person name="Leem S.-H."/>
            <person name="Lopez F."/>
            <person name="Lou Y."/>
            <person name="Lowry S."/>
            <person name="Malfatti S."/>
            <person name="Martinez D."/>
            <person name="McCready P.M."/>
            <person name="Medina C."/>
            <person name="Morgan J."/>
            <person name="Nelson K."/>
            <person name="Nolan M."/>
            <person name="Ovcharenko I."/>
            <person name="Pitluck S."/>
            <person name="Pollard M."/>
            <person name="Popkie A.P."/>
            <person name="Predki P."/>
            <person name="Quan G."/>
            <person name="Ramirez L."/>
            <person name="Rash S."/>
            <person name="Retterer J."/>
            <person name="Rodriguez A."/>
            <person name="Rogers S."/>
            <person name="Salamov A."/>
            <person name="Salazar A."/>
            <person name="She X."/>
            <person name="Smith D."/>
            <person name="Slezak T."/>
            <person name="Solovyev V."/>
            <person name="Thayer N."/>
            <person name="Tice H."/>
            <person name="Tsai M."/>
            <person name="Ustaszewska A."/>
            <person name="Vo N."/>
            <person name="Wagner M."/>
            <person name="Wheeler J."/>
            <person name="Wu K."/>
            <person name="Xie G."/>
            <person name="Yang J."/>
            <person name="Dubchak I."/>
            <person name="Furey T.S."/>
            <person name="DeJong P."/>
            <person name="Dickson M."/>
            <person name="Gordon D."/>
            <person name="Eichler E.E."/>
            <person name="Pennacchio L.A."/>
            <person name="Richardson P."/>
            <person name="Stubbs L."/>
            <person name="Rokhsar D.S."/>
            <person name="Myers R.M."/>
            <person name="Rubin E.M."/>
            <person name="Lucas S.M."/>
        </authorList>
    </citation>
    <scope>NUCLEOTIDE SEQUENCE [LARGE SCALE GENOMIC DNA]</scope>
</reference>
<reference key="2">
    <citation type="journal article" date="1998" name="J. Biol. Chem.">
        <title>N-Shc and Sck, two neuronally expressed Shc adapter homologs. Their differential regional expression in the brain and roles in neurotrophin and Src signaling.</title>
        <authorList>
            <person name="Nakamura T."/>
            <person name="Muraoka S."/>
            <person name="Sanokawa R."/>
            <person name="Mori N."/>
        </authorList>
    </citation>
    <scope>NUCLEOTIDE SEQUENCE [MRNA] OF 45-582</scope>
    <scope>INTERACTION WITH THE TRK RECEPTORS</scope>
    <scope>TISSUE SPECIFICITY</scope>
</reference>
<reference key="3">
    <citation type="journal article" date="1996" name="Oncogene">
        <title>A family of Shc related proteins with conserved PTB, CH1 and SH2 regions.</title>
        <authorList>
            <person name="Pelicci G."/>
            <person name="Dente L."/>
            <person name="De Giuseppe A."/>
            <person name="Verducci-Galletti B."/>
            <person name="Giuli S."/>
            <person name="Mele S."/>
            <person name="Vetriani C."/>
            <person name="Giorgio M."/>
            <person name="Pandolfi P.P."/>
            <person name="Cesareni G."/>
            <person name="Pelicci P.-G."/>
        </authorList>
    </citation>
    <scope>NUCLEOTIDE SEQUENCE [MRNA] OF 96-582</scope>
    <source>
        <tissue>Fetal brain</tissue>
    </source>
</reference>
<reference key="4">
    <citation type="journal article" date="1994" name="Science">
        <title>An alternative to SH2 domains for binding tyrosine-phosphorylated proteins.</title>
        <authorList>
            <person name="Kavanaugh W.M."/>
            <person name="Williams L.T."/>
        </authorList>
    </citation>
    <scope>NUCLEOTIDE SEQUENCE [MRNA] OF 114-541</scope>
</reference>
<reference key="5">
    <citation type="submission" date="2000-07" db="EMBL/GenBank/DDBJ databases">
        <authorList>
            <consortium name="The European IMAGE consortium"/>
        </authorList>
    </citation>
    <scope>NUCLEOTIDE SEQUENCE [LARGE SCALE MRNA] OF 191-582</scope>
</reference>
<reference key="6">
    <citation type="journal article" date="2002" name="J. Biol. Chem.">
        <title>ShcB and ShcC activation by the Trk family of receptor tyrosine kinases.</title>
        <authorList>
            <person name="Liu H.Y."/>
            <person name="Meakin S.O."/>
        </authorList>
    </citation>
    <scope>PHOSPHORYLATION AT TYR-338; TYR-339 AND TYR-414</scope>
    <scope>INTERACTION WITH THE TRK RECEPTORS</scope>
</reference>
<reference key="7">
    <citation type="journal article" date="2005" name="J. Biol. Chem.">
        <title>Platelet endothelial aggregation receptor 1 (PEAR1), a novel epidermal growth factor repeat-containing transmembrane receptor, participates in platelet contact-induced activation.</title>
        <authorList>
            <person name="Nanda N."/>
            <person name="Bao M."/>
            <person name="Lin H."/>
            <person name="Clauser K."/>
            <person name="Komuves L."/>
            <person name="Quertermous T."/>
            <person name="Conley P.B."/>
            <person name="Phillips D.R."/>
            <person name="Hart M.J."/>
        </authorList>
    </citation>
    <scope>INTERACTION WITH MEGF12</scope>
    <source>
        <tissue>Platelet</tissue>
    </source>
</reference>
<protein>
    <recommendedName>
        <fullName>SHC-transforming protein 2</fullName>
    </recommendedName>
    <alternativeName>
        <fullName>Protein Sck</fullName>
    </alternativeName>
    <alternativeName>
        <fullName>SHC-transforming protein B</fullName>
    </alternativeName>
    <alternativeName>
        <fullName>Src homology 2 domain-containing-transforming protein C2</fullName>
        <shortName>SH2 domain protein C2</shortName>
    </alternativeName>
</protein>
<proteinExistence type="evidence at protein level"/>